<comment type="function">
    <text evidence="5">Involved in the guiding of mitochondrial tubules to the bud tip during cell division.</text>
</comment>
<comment type="subunit">
    <text evidence="3 5">Interacts with MYO2 and PCL7.</text>
</comment>
<comment type="interaction">
    <interactant intactId="EBI-37386">
        <id>Q06324</id>
    </interactant>
    <interactant intactId="EBI-27228">
        <id>Q04477</id>
        <label>SPC24</label>
    </interactant>
    <organismsDiffer>false</organismsDiffer>
    <experiments>3</experiments>
</comment>
<comment type="subcellular location">
    <subcellularLocation>
        <location>Bud tip</location>
    </subcellularLocation>
    <subcellularLocation>
        <location>Bud neck</location>
    </subcellularLocation>
    <subcellularLocation>
        <location>Mitochondrion outer membrane</location>
        <topology>Peripheral membrane protein</topology>
    </subcellularLocation>
</comment>
<comment type="PTM">
    <text evidence="3">Phosphorylated by the cyclin-CDK PCL7-PHO85.</text>
</comment>
<comment type="miscellaneous">
    <text evidence="4">Present with 1070 molecules/cell in log phase SD medium.</text>
</comment>
<protein>
    <recommendedName>
        <fullName>Mitochondrial MYO2 receptor-related protein 1</fullName>
    </recommendedName>
</protein>
<name>MMR1_YEAST</name>
<feature type="chain" id="PRO_0000245841" description="Mitochondrial MYO2 receptor-related protein 1">
    <location>
        <begin position="1"/>
        <end position="491"/>
    </location>
</feature>
<feature type="region of interest" description="Interaction with MYO2" evidence="5">
    <location>
        <begin position="300"/>
        <end position="439"/>
    </location>
</feature>
<feature type="region of interest" description="Disordered" evidence="2">
    <location>
        <begin position="419"/>
        <end position="491"/>
    </location>
</feature>
<feature type="coiled-coil region" evidence="1">
    <location>
        <begin position="295"/>
        <end position="384"/>
    </location>
</feature>
<feature type="compositionally biased region" description="Polar residues" evidence="2">
    <location>
        <begin position="461"/>
        <end position="472"/>
    </location>
</feature>
<feature type="modified residue" description="Phosphothreonine" evidence="6">
    <location>
        <position position="12"/>
    </location>
</feature>
<feature type="modified residue" description="Phosphoserine" evidence="6">
    <location>
        <position position="16"/>
    </location>
</feature>
<feature type="modified residue" description="Phosphoserine" evidence="6">
    <location>
        <position position="37"/>
    </location>
</feature>
<feature type="helix" evidence="7">
    <location>
        <begin position="419"/>
        <end position="422"/>
    </location>
</feature>
<dbReference type="EMBL" id="U17246">
    <property type="protein sequence ID" value="AAB67454.1"/>
    <property type="molecule type" value="Genomic_DNA"/>
</dbReference>
<dbReference type="EMBL" id="BK006945">
    <property type="protein sequence ID" value="DAA09509.1"/>
    <property type="molecule type" value="Genomic_DNA"/>
</dbReference>
<dbReference type="PIR" id="S51435">
    <property type="entry name" value="S51435"/>
</dbReference>
<dbReference type="RefSeq" id="NP_013291.1">
    <property type="nucleotide sequence ID" value="NM_001182077.1"/>
</dbReference>
<dbReference type="PDB" id="6IXP">
    <property type="method" value="X-ray"/>
    <property type="resolution" value="2.73 A"/>
    <property type="chains" value="B/C/E/F=398-430"/>
</dbReference>
<dbReference type="PDBsum" id="6IXP"/>
<dbReference type="SMR" id="Q06324"/>
<dbReference type="BioGRID" id="31460">
    <property type="interactions" value="403"/>
</dbReference>
<dbReference type="DIP" id="DIP-1498N"/>
<dbReference type="FunCoup" id="Q06324">
    <property type="interactions" value="67"/>
</dbReference>
<dbReference type="IntAct" id="Q06324">
    <property type="interactions" value="3"/>
</dbReference>
<dbReference type="MINT" id="Q06324"/>
<dbReference type="STRING" id="4932.YLR190W"/>
<dbReference type="GlyGen" id="Q06324">
    <property type="glycosylation" value="1 site"/>
</dbReference>
<dbReference type="iPTMnet" id="Q06324"/>
<dbReference type="PaxDb" id="4932-YLR190W"/>
<dbReference type="PeptideAtlas" id="Q06324"/>
<dbReference type="EnsemblFungi" id="YLR190W_mRNA">
    <property type="protein sequence ID" value="YLR190W"/>
    <property type="gene ID" value="YLR190W"/>
</dbReference>
<dbReference type="GeneID" id="850887"/>
<dbReference type="KEGG" id="sce:YLR190W"/>
<dbReference type="AGR" id="SGD:S000004180"/>
<dbReference type="SGD" id="S000004180">
    <property type="gene designation" value="MMR1"/>
</dbReference>
<dbReference type="VEuPathDB" id="FungiDB:YLR190W"/>
<dbReference type="eggNOG" id="ENOG502RXGA">
    <property type="taxonomic scope" value="Eukaryota"/>
</dbReference>
<dbReference type="HOGENOM" id="CLU_029804_0_0_1"/>
<dbReference type="InParanoid" id="Q06324"/>
<dbReference type="OMA" id="HISMQMA"/>
<dbReference type="OrthoDB" id="4035554at2759"/>
<dbReference type="BioCyc" id="YEAST:G3O-32312-MONOMER"/>
<dbReference type="BioGRID-ORCS" id="850887">
    <property type="hits" value="4 hits in 10 CRISPR screens"/>
</dbReference>
<dbReference type="PRO" id="PR:Q06324"/>
<dbReference type="Proteomes" id="UP000002311">
    <property type="component" value="Chromosome XII"/>
</dbReference>
<dbReference type="RNAct" id="Q06324">
    <property type="molecule type" value="protein"/>
</dbReference>
<dbReference type="GO" id="GO:0005933">
    <property type="term" value="C:cellular bud"/>
    <property type="evidence" value="ECO:0000314"/>
    <property type="project" value="SGD"/>
</dbReference>
<dbReference type="GO" id="GO:0005935">
    <property type="term" value="C:cellular bud neck"/>
    <property type="evidence" value="ECO:0000314"/>
    <property type="project" value="SGD"/>
</dbReference>
<dbReference type="GO" id="GO:0005934">
    <property type="term" value="C:cellular bud tip"/>
    <property type="evidence" value="ECO:0007669"/>
    <property type="project" value="UniProtKB-SubCell"/>
</dbReference>
<dbReference type="GO" id="GO:0032541">
    <property type="term" value="C:cortical endoplasmic reticulum"/>
    <property type="evidence" value="ECO:0000314"/>
    <property type="project" value="SGD"/>
</dbReference>
<dbReference type="GO" id="GO:0000131">
    <property type="term" value="C:incipient cellular bud site"/>
    <property type="evidence" value="ECO:0000314"/>
    <property type="project" value="SGD"/>
</dbReference>
<dbReference type="GO" id="GO:0005741">
    <property type="term" value="C:mitochondrial outer membrane"/>
    <property type="evidence" value="ECO:0000314"/>
    <property type="project" value="SGD"/>
</dbReference>
<dbReference type="GO" id="GO:0005739">
    <property type="term" value="C:mitochondrion"/>
    <property type="evidence" value="ECO:0007005"/>
    <property type="project" value="SGD"/>
</dbReference>
<dbReference type="GO" id="GO:0005543">
    <property type="term" value="F:phospholipid binding"/>
    <property type="evidence" value="ECO:0000314"/>
    <property type="project" value="SGD"/>
</dbReference>
<dbReference type="GO" id="GO:0051301">
    <property type="term" value="P:cell division"/>
    <property type="evidence" value="ECO:0007669"/>
    <property type="project" value="UniProtKB-KW"/>
</dbReference>
<dbReference type="GO" id="GO:0048312">
    <property type="term" value="P:intracellular distribution of mitochondria"/>
    <property type="evidence" value="ECO:0000315"/>
    <property type="project" value="SGD"/>
</dbReference>
<dbReference type="GO" id="GO:0000001">
    <property type="term" value="P:mitochondrion inheritance"/>
    <property type="evidence" value="ECO:0000315"/>
    <property type="project" value="SGD"/>
</dbReference>
<dbReference type="InterPro" id="IPR013712">
    <property type="entry name" value="MMR1"/>
</dbReference>
<dbReference type="Pfam" id="PF08505">
    <property type="entry name" value="MMR1"/>
    <property type="match status" value="2"/>
</dbReference>
<organism>
    <name type="scientific">Saccharomyces cerevisiae (strain ATCC 204508 / S288c)</name>
    <name type="common">Baker's yeast</name>
    <dbReference type="NCBI Taxonomy" id="559292"/>
    <lineage>
        <taxon>Eukaryota</taxon>
        <taxon>Fungi</taxon>
        <taxon>Dikarya</taxon>
        <taxon>Ascomycota</taxon>
        <taxon>Saccharomycotina</taxon>
        <taxon>Saccharomycetes</taxon>
        <taxon>Saccharomycetales</taxon>
        <taxon>Saccharomycetaceae</taxon>
        <taxon>Saccharomyces</taxon>
    </lineage>
</organism>
<proteinExistence type="evidence at protein level"/>
<evidence type="ECO:0000255" key="1"/>
<evidence type="ECO:0000256" key="2">
    <source>
        <dbReference type="SAM" id="MobiDB-lite"/>
    </source>
</evidence>
<evidence type="ECO:0000269" key="3">
    <source>
    </source>
</evidence>
<evidence type="ECO:0000269" key="4">
    <source>
    </source>
</evidence>
<evidence type="ECO:0000269" key="5">
    <source>
    </source>
</evidence>
<evidence type="ECO:0007744" key="6">
    <source>
    </source>
</evidence>
<evidence type="ECO:0007829" key="7">
    <source>
        <dbReference type="PDB" id="6IXP"/>
    </source>
</evidence>
<accession>Q06324</accession>
<accession>D6VYJ3</accession>
<gene>
    <name type="primary">MMR1</name>
    <name type="ordered locus">YLR190W</name>
</gene>
<sequence length="491" mass="54817">MNSPTMKSEQLTPKLSPMSFCLDDQRNAGSFQNLLNSPTKLKLDTGPIGNSLLYPTSLSKLSELSRGGRSKQRRGSDTMRSVSPIRFQFLNNTPKMLKPEYLSQTTSNLPLLSALLKNSKKTTSEGQNSNPDPLNIEKNIIKQSIKDKLEQLRSSESVAQVQKKERNPPSFEAKVCAEEPILRKNAEGLLPSYVPVPATPLEDPENHGVRKVEDKGLRVVSGGSTQCLSTEVNELPKDLNLDNLPTDNNGFVQYGLKGNNNNNRYSFISSTSTDYEPEWCDGQQHISMQMASMANAEEANSREKSNLDIKIKQLELEITELKLQNEKLVHSMTTNRYIEERFMLEVMKDPSIQAQRSQRDIERKVKQLEKKFFNCKKVLKKLTESSAVVATSTSKTEGNSARIPCPKTRLARVSVLDLKKIEEQPDSSSGTSSEEDHLTNDDTDANTSEDLNVAFEEEPTSAISTTASVQSGESKRGFQLNLPVQVEKKEK</sequence>
<reference key="1">
    <citation type="journal article" date="1997" name="Nature">
        <title>The nucleotide sequence of Saccharomyces cerevisiae chromosome XII.</title>
        <authorList>
            <person name="Johnston M."/>
            <person name="Hillier L.W."/>
            <person name="Riles L."/>
            <person name="Albermann K."/>
            <person name="Andre B."/>
            <person name="Ansorge W."/>
            <person name="Benes V."/>
            <person name="Brueckner M."/>
            <person name="Delius H."/>
            <person name="Dubois E."/>
            <person name="Duesterhoeft A."/>
            <person name="Entian K.-D."/>
            <person name="Floeth M."/>
            <person name="Goffeau A."/>
            <person name="Hebling U."/>
            <person name="Heumann K."/>
            <person name="Heuss-Neitzel D."/>
            <person name="Hilbert H."/>
            <person name="Hilger F."/>
            <person name="Kleine K."/>
            <person name="Koetter P."/>
            <person name="Louis E.J."/>
            <person name="Messenguy F."/>
            <person name="Mewes H.-W."/>
            <person name="Miosga T."/>
            <person name="Moestl D."/>
            <person name="Mueller-Auer S."/>
            <person name="Nentwich U."/>
            <person name="Obermaier B."/>
            <person name="Piravandi E."/>
            <person name="Pohl T.M."/>
            <person name="Portetelle D."/>
            <person name="Purnelle B."/>
            <person name="Rechmann S."/>
            <person name="Rieger M."/>
            <person name="Rinke M."/>
            <person name="Rose M."/>
            <person name="Scharfe M."/>
            <person name="Scherens B."/>
            <person name="Scholler P."/>
            <person name="Schwager C."/>
            <person name="Schwarz S."/>
            <person name="Underwood A.P."/>
            <person name="Urrestarazu L.A."/>
            <person name="Vandenbol M."/>
            <person name="Verhasselt P."/>
            <person name="Vierendeels F."/>
            <person name="Voet M."/>
            <person name="Volckaert G."/>
            <person name="Voss H."/>
            <person name="Wambutt R."/>
            <person name="Wedler E."/>
            <person name="Wedler H."/>
            <person name="Zimmermann F.K."/>
            <person name="Zollner A."/>
            <person name="Hani J."/>
            <person name="Hoheisel J.D."/>
        </authorList>
    </citation>
    <scope>NUCLEOTIDE SEQUENCE [LARGE SCALE GENOMIC DNA]</scope>
    <source>
        <strain>ATCC 204508 / S288c</strain>
    </source>
</reference>
<reference key="2">
    <citation type="journal article" date="2014" name="G3 (Bethesda)">
        <title>The reference genome sequence of Saccharomyces cerevisiae: Then and now.</title>
        <authorList>
            <person name="Engel S.R."/>
            <person name="Dietrich F.S."/>
            <person name="Fisk D.G."/>
            <person name="Binkley G."/>
            <person name="Balakrishnan R."/>
            <person name="Costanzo M.C."/>
            <person name="Dwight S.S."/>
            <person name="Hitz B.C."/>
            <person name="Karra K."/>
            <person name="Nash R.S."/>
            <person name="Weng S."/>
            <person name="Wong E.D."/>
            <person name="Lloyd P."/>
            <person name="Skrzypek M.S."/>
            <person name="Miyasato S.R."/>
            <person name="Simison M."/>
            <person name="Cherry J.M."/>
        </authorList>
    </citation>
    <scope>GENOME REANNOTATION</scope>
    <source>
        <strain>ATCC 204508 / S288c</strain>
    </source>
</reference>
<reference key="3">
    <citation type="journal article" date="2002" name="Sheng Wu Hua Xue Yu Sheng Wu Wu Li Xue Bao">
        <title>Phosphorylation of YLR190w by PAP1 PHO85 kinase complex.</title>
        <authorList>
            <person name="Shi X.Z."/>
            <person name="Ao S.Z."/>
        </authorList>
    </citation>
    <scope>PHOSPHORYLATION</scope>
    <scope>INTERACTION WITH PCL7</scope>
</reference>
<reference key="4">
    <citation type="journal article" date="2003" name="Nature">
        <title>Global analysis of protein expression in yeast.</title>
        <authorList>
            <person name="Ghaemmaghami S."/>
            <person name="Huh W.-K."/>
            <person name="Bower K."/>
            <person name="Howson R.W."/>
            <person name="Belle A."/>
            <person name="Dephoure N."/>
            <person name="O'Shea E.K."/>
            <person name="Weissman J.S."/>
        </authorList>
    </citation>
    <scope>LEVEL OF PROTEIN EXPRESSION [LARGE SCALE ANALYSIS]</scope>
</reference>
<reference key="5">
    <citation type="journal article" date="2003" name="Proc. Natl. Acad. Sci. U.S.A.">
        <title>Widespread cytoplasmic mRNA transport in yeast: identification of 22 bud-localized transcripts using DNA microarray analysis.</title>
        <authorList>
            <person name="Shepard K.A."/>
            <person name="Gerber A.P."/>
            <person name="Jambhekar A."/>
            <person name="Takizawa P.A."/>
            <person name="Brown P.O."/>
            <person name="Herschlag D."/>
            <person name="DeRisi J.L."/>
            <person name="Vale R.D."/>
        </authorList>
    </citation>
    <scope>SUBCELLULAR LOCATION</scope>
</reference>
<reference key="6">
    <citation type="journal article" date="2004" name="EMBO J.">
        <title>Mmr1p is a mitochondrial factor for Myo2p-dependent inheritance of mitochondria in the budding yeast.</title>
        <authorList>
            <person name="Itoh T."/>
            <person name="Toh-e A."/>
            <person name="Matsui Y."/>
        </authorList>
    </citation>
    <scope>FUNCTION</scope>
    <scope>SUBCELLULAR LOCATION</scope>
    <scope>INTERACTION WITH MYO2</scope>
</reference>
<reference key="7">
    <citation type="journal article" date="2008" name="Mol. Cell. Proteomics">
        <title>A multidimensional chromatography technology for in-depth phosphoproteome analysis.</title>
        <authorList>
            <person name="Albuquerque C.P."/>
            <person name="Smolka M.B."/>
            <person name="Payne S.H."/>
            <person name="Bafna V."/>
            <person name="Eng J."/>
            <person name="Zhou H."/>
        </authorList>
    </citation>
    <scope>IDENTIFICATION BY MASS SPECTROMETRY [LARGE SCALE ANALYSIS]</scope>
</reference>
<reference key="8">
    <citation type="journal article" date="2009" name="Science">
        <title>Global analysis of Cdk1 substrate phosphorylation sites provides insights into evolution.</title>
        <authorList>
            <person name="Holt L.J."/>
            <person name="Tuch B.B."/>
            <person name="Villen J."/>
            <person name="Johnson A.D."/>
            <person name="Gygi S.P."/>
            <person name="Morgan D.O."/>
        </authorList>
    </citation>
    <scope>PHOSPHORYLATION [LARGE SCALE ANALYSIS] AT THR-12; SER-16 AND SER-37</scope>
    <scope>IDENTIFICATION BY MASS SPECTROMETRY [LARGE SCALE ANALYSIS]</scope>
</reference>
<keyword id="KW-0002">3D-structure</keyword>
<keyword id="KW-0131">Cell cycle</keyword>
<keyword id="KW-0132">Cell division</keyword>
<keyword id="KW-0175">Coiled coil</keyword>
<keyword id="KW-0472">Membrane</keyword>
<keyword id="KW-0496">Mitochondrion</keyword>
<keyword id="KW-1000">Mitochondrion outer membrane</keyword>
<keyword id="KW-0597">Phosphoprotein</keyword>
<keyword id="KW-1185">Reference proteome</keyword>